<reference key="1">
    <citation type="journal article" date="2002" name="Proc. Natl. Acad. Sci. U.S.A.">
        <title>The Brucella suis genome reveals fundamental similarities between animal and plant pathogens and symbionts.</title>
        <authorList>
            <person name="Paulsen I.T."/>
            <person name="Seshadri R."/>
            <person name="Nelson K.E."/>
            <person name="Eisen J.A."/>
            <person name="Heidelberg J.F."/>
            <person name="Read T.D."/>
            <person name="Dodson R.J."/>
            <person name="Umayam L.A."/>
            <person name="Brinkac L.M."/>
            <person name="Beanan M.J."/>
            <person name="Daugherty S.C."/>
            <person name="DeBoy R.T."/>
            <person name="Durkin A.S."/>
            <person name="Kolonay J.F."/>
            <person name="Madupu R."/>
            <person name="Nelson W.C."/>
            <person name="Ayodeji B."/>
            <person name="Kraul M."/>
            <person name="Shetty J."/>
            <person name="Malek J.A."/>
            <person name="Van Aken S.E."/>
            <person name="Riedmuller S."/>
            <person name="Tettelin H."/>
            <person name="Gill S.R."/>
            <person name="White O."/>
            <person name="Salzberg S.L."/>
            <person name="Hoover D.L."/>
            <person name="Lindler L.E."/>
            <person name="Halling S.M."/>
            <person name="Boyle S.M."/>
            <person name="Fraser C.M."/>
        </authorList>
    </citation>
    <scope>NUCLEOTIDE SEQUENCE [LARGE SCALE GENOMIC DNA]</scope>
    <source>
        <strain>1330</strain>
    </source>
</reference>
<reference key="2">
    <citation type="journal article" date="2011" name="J. Bacteriol.">
        <title>Revised genome sequence of Brucella suis 1330.</title>
        <authorList>
            <person name="Tae H."/>
            <person name="Shallom S."/>
            <person name="Settlage R."/>
            <person name="Preston D."/>
            <person name="Adams L.G."/>
            <person name="Garner H.R."/>
        </authorList>
    </citation>
    <scope>NUCLEOTIDE SEQUENCE [LARGE SCALE GENOMIC DNA]</scope>
    <source>
        <strain>1330</strain>
    </source>
</reference>
<proteinExistence type="inferred from homology"/>
<feature type="chain" id="PRO_0000182276" description="Transcriptional repressor NrdR">
    <location>
        <begin position="1"/>
        <end position="158"/>
    </location>
</feature>
<feature type="domain" description="ATP-cone" evidence="1">
    <location>
        <begin position="49"/>
        <end position="139"/>
    </location>
</feature>
<feature type="zinc finger region" evidence="1">
    <location>
        <begin position="3"/>
        <end position="34"/>
    </location>
</feature>
<dbReference type="EMBL" id="AE014291">
    <property type="protein sequence ID" value="AAN29695.1"/>
    <property type="molecule type" value="Genomic_DNA"/>
</dbReference>
<dbReference type="EMBL" id="CP002997">
    <property type="protein sequence ID" value="AEM18112.1"/>
    <property type="molecule type" value="Genomic_DNA"/>
</dbReference>
<dbReference type="RefSeq" id="WP_002966765.1">
    <property type="nucleotide sequence ID" value="NZ_KN046804.1"/>
</dbReference>
<dbReference type="SMR" id="P67312"/>
<dbReference type="GeneID" id="93016844"/>
<dbReference type="KEGG" id="bms:BR0766"/>
<dbReference type="KEGG" id="bsi:BS1330_I0762"/>
<dbReference type="PATRIC" id="fig|204722.21.peg.2644"/>
<dbReference type="HOGENOM" id="CLU_108412_0_1_5"/>
<dbReference type="Proteomes" id="UP000007104">
    <property type="component" value="Chromosome I"/>
</dbReference>
<dbReference type="GO" id="GO:0005524">
    <property type="term" value="F:ATP binding"/>
    <property type="evidence" value="ECO:0007669"/>
    <property type="project" value="UniProtKB-KW"/>
</dbReference>
<dbReference type="GO" id="GO:0003677">
    <property type="term" value="F:DNA binding"/>
    <property type="evidence" value="ECO:0007669"/>
    <property type="project" value="UniProtKB-KW"/>
</dbReference>
<dbReference type="GO" id="GO:0008270">
    <property type="term" value="F:zinc ion binding"/>
    <property type="evidence" value="ECO:0007669"/>
    <property type="project" value="UniProtKB-UniRule"/>
</dbReference>
<dbReference type="GO" id="GO:0045892">
    <property type="term" value="P:negative regulation of DNA-templated transcription"/>
    <property type="evidence" value="ECO:0007669"/>
    <property type="project" value="UniProtKB-UniRule"/>
</dbReference>
<dbReference type="HAMAP" id="MF_00440">
    <property type="entry name" value="NrdR"/>
    <property type="match status" value="1"/>
</dbReference>
<dbReference type="InterPro" id="IPR005144">
    <property type="entry name" value="ATP-cone_dom"/>
</dbReference>
<dbReference type="InterPro" id="IPR055173">
    <property type="entry name" value="NrdR-like_N"/>
</dbReference>
<dbReference type="InterPro" id="IPR003796">
    <property type="entry name" value="RNR_NrdR-like"/>
</dbReference>
<dbReference type="NCBIfam" id="TIGR00244">
    <property type="entry name" value="transcriptional regulator NrdR"/>
    <property type="match status" value="1"/>
</dbReference>
<dbReference type="PANTHER" id="PTHR30455">
    <property type="entry name" value="TRANSCRIPTIONAL REPRESSOR NRDR"/>
    <property type="match status" value="1"/>
</dbReference>
<dbReference type="PANTHER" id="PTHR30455:SF2">
    <property type="entry name" value="TRANSCRIPTIONAL REPRESSOR NRDR"/>
    <property type="match status" value="1"/>
</dbReference>
<dbReference type="Pfam" id="PF03477">
    <property type="entry name" value="ATP-cone"/>
    <property type="match status" value="1"/>
</dbReference>
<dbReference type="Pfam" id="PF22811">
    <property type="entry name" value="Zn_ribbon_NrdR"/>
    <property type="match status" value="1"/>
</dbReference>
<dbReference type="PROSITE" id="PS51161">
    <property type="entry name" value="ATP_CONE"/>
    <property type="match status" value="1"/>
</dbReference>
<protein>
    <recommendedName>
        <fullName evidence="1">Transcriptional repressor NrdR</fullName>
    </recommendedName>
</protein>
<name>NRDR_BRUSU</name>
<sequence length="158" mass="17933">MRCPYCQSEDTQVKDSRPAEDGAVIRRRRVCSVCGGRFTTFERVQLRDLMVVKKSGRRVPFDRDKLTRSIEVALRKRDVDSERVERAISGIVRQLESAGEAEVTSDEIGRLAMDALKGIDDIAYIRFASVYRNFSKAVDFHNVIDELTVSETGDNLET</sequence>
<evidence type="ECO:0000255" key="1">
    <source>
        <dbReference type="HAMAP-Rule" id="MF_00440"/>
    </source>
</evidence>
<keyword id="KW-0067">ATP-binding</keyword>
<keyword id="KW-0238">DNA-binding</keyword>
<keyword id="KW-0479">Metal-binding</keyword>
<keyword id="KW-0547">Nucleotide-binding</keyword>
<keyword id="KW-0678">Repressor</keyword>
<keyword id="KW-0804">Transcription</keyword>
<keyword id="KW-0805">Transcription regulation</keyword>
<keyword id="KW-0862">Zinc</keyword>
<keyword id="KW-0863">Zinc-finger</keyword>
<organism>
    <name type="scientific">Brucella suis biovar 1 (strain 1330)</name>
    <dbReference type="NCBI Taxonomy" id="204722"/>
    <lineage>
        <taxon>Bacteria</taxon>
        <taxon>Pseudomonadati</taxon>
        <taxon>Pseudomonadota</taxon>
        <taxon>Alphaproteobacteria</taxon>
        <taxon>Hyphomicrobiales</taxon>
        <taxon>Brucellaceae</taxon>
        <taxon>Brucella/Ochrobactrum group</taxon>
        <taxon>Brucella</taxon>
    </lineage>
</organism>
<gene>
    <name evidence="1" type="primary">nrdR</name>
    <name type="ordered locus">BR0766</name>
    <name type="ordered locus">BS1330_I0762</name>
</gene>
<accession>P67312</accession>
<accession>G0K8I5</accession>
<accession>Q8YGG9</accession>
<comment type="function">
    <text evidence="1">Negatively regulates transcription of bacterial ribonucleotide reductase nrd genes and operons by binding to NrdR-boxes.</text>
</comment>
<comment type="cofactor">
    <cofactor evidence="1">
        <name>Zn(2+)</name>
        <dbReference type="ChEBI" id="CHEBI:29105"/>
    </cofactor>
    <text evidence="1">Binds 1 zinc ion.</text>
</comment>
<comment type="similarity">
    <text evidence="1">Belongs to the NrdR family.</text>
</comment>